<organism>
    <name type="scientific">Streptococcus pyogenes serotype M12 (strain MGAS9429)</name>
    <dbReference type="NCBI Taxonomy" id="370551"/>
    <lineage>
        <taxon>Bacteria</taxon>
        <taxon>Bacillati</taxon>
        <taxon>Bacillota</taxon>
        <taxon>Bacilli</taxon>
        <taxon>Lactobacillales</taxon>
        <taxon>Streptococcaceae</taxon>
        <taxon>Streptococcus</taxon>
    </lineage>
</organism>
<keyword id="KW-0687">Ribonucleoprotein</keyword>
<keyword id="KW-0689">Ribosomal protein</keyword>
<keyword id="KW-0694">RNA-binding</keyword>
<keyword id="KW-0699">rRNA-binding</keyword>
<feature type="chain" id="PRO_0000323208" description="Small ribosomal subunit protein uS5">
    <location>
        <begin position="1"/>
        <end position="164"/>
    </location>
</feature>
<feature type="domain" description="S5 DRBM" evidence="1">
    <location>
        <begin position="10"/>
        <end position="73"/>
    </location>
</feature>
<gene>
    <name evidence="1" type="primary">rpsE</name>
    <name type="ordered locus">MGAS9429_Spy0061</name>
</gene>
<dbReference type="EMBL" id="CP000259">
    <property type="protein sequence ID" value="ABF31249.1"/>
    <property type="molecule type" value="Genomic_DNA"/>
</dbReference>
<dbReference type="RefSeq" id="WP_002986625.1">
    <property type="nucleotide sequence ID" value="NC_008021.1"/>
</dbReference>
<dbReference type="SMR" id="Q1JP00"/>
<dbReference type="GeneID" id="69900043"/>
<dbReference type="KEGG" id="spk:MGAS9429_Spy0061"/>
<dbReference type="HOGENOM" id="CLU_065898_2_2_9"/>
<dbReference type="Proteomes" id="UP000002433">
    <property type="component" value="Chromosome"/>
</dbReference>
<dbReference type="GO" id="GO:0015935">
    <property type="term" value="C:small ribosomal subunit"/>
    <property type="evidence" value="ECO:0007669"/>
    <property type="project" value="InterPro"/>
</dbReference>
<dbReference type="GO" id="GO:0019843">
    <property type="term" value="F:rRNA binding"/>
    <property type="evidence" value="ECO:0007669"/>
    <property type="project" value="UniProtKB-UniRule"/>
</dbReference>
<dbReference type="GO" id="GO:0003735">
    <property type="term" value="F:structural constituent of ribosome"/>
    <property type="evidence" value="ECO:0007669"/>
    <property type="project" value="InterPro"/>
</dbReference>
<dbReference type="GO" id="GO:0006412">
    <property type="term" value="P:translation"/>
    <property type="evidence" value="ECO:0007669"/>
    <property type="project" value="UniProtKB-UniRule"/>
</dbReference>
<dbReference type="FunFam" id="3.30.160.20:FF:000001">
    <property type="entry name" value="30S ribosomal protein S5"/>
    <property type="match status" value="1"/>
</dbReference>
<dbReference type="FunFam" id="3.30.230.10:FF:000002">
    <property type="entry name" value="30S ribosomal protein S5"/>
    <property type="match status" value="1"/>
</dbReference>
<dbReference type="Gene3D" id="3.30.160.20">
    <property type="match status" value="1"/>
</dbReference>
<dbReference type="Gene3D" id="3.30.230.10">
    <property type="match status" value="1"/>
</dbReference>
<dbReference type="HAMAP" id="MF_01307_B">
    <property type="entry name" value="Ribosomal_uS5_B"/>
    <property type="match status" value="1"/>
</dbReference>
<dbReference type="InterPro" id="IPR020568">
    <property type="entry name" value="Ribosomal_Su5_D2-typ_SF"/>
</dbReference>
<dbReference type="InterPro" id="IPR000851">
    <property type="entry name" value="Ribosomal_uS5"/>
</dbReference>
<dbReference type="InterPro" id="IPR005712">
    <property type="entry name" value="Ribosomal_uS5_bac-type"/>
</dbReference>
<dbReference type="InterPro" id="IPR005324">
    <property type="entry name" value="Ribosomal_uS5_C"/>
</dbReference>
<dbReference type="InterPro" id="IPR013810">
    <property type="entry name" value="Ribosomal_uS5_N"/>
</dbReference>
<dbReference type="InterPro" id="IPR018192">
    <property type="entry name" value="Ribosomal_uS5_N_CS"/>
</dbReference>
<dbReference type="InterPro" id="IPR014721">
    <property type="entry name" value="Ribsml_uS5_D2-typ_fold_subgr"/>
</dbReference>
<dbReference type="NCBIfam" id="TIGR01021">
    <property type="entry name" value="rpsE_bact"/>
    <property type="match status" value="1"/>
</dbReference>
<dbReference type="PANTHER" id="PTHR48277">
    <property type="entry name" value="MITOCHONDRIAL RIBOSOMAL PROTEIN S5"/>
    <property type="match status" value="1"/>
</dbReference>
<dbReference type="PANTHER" id="PTHR48277:SF1">
    <property type="entry name" value="MITOCHONDRIAL RIBOSOMAL PROTEIN S5"/>
    <property type="match status" value="1"/>
</dbReference>
<dbReference type="Pfam" id="PF00333">
    <property type="entry name" value="Ribosomal_S5"/>
    <property type="match status" value="1"/>
</dbReference>
<dbReference type="Pfam" id="PF03719">
    <property type="entry name" value="Ribosomal_S5_C"/>
    <property type="match status" value="1"/>
</dbReference>
<dbReference type="SUPFAM" id="SSF54768">
    <property type="entry name" value="dsRNA-binding domain-like"/>
    <property type="match status" value="1"/>
</dbReference>
<dbReference type="SUPFAM" id="SSF54211">
    <property type="entry name" value="Ribosomal protein S5 domain 2-like"/>
    <property type="match status" value="1"/>
</dbReference>
<dbReference type="PROSITE" id="PS00585">
    <property type="entry name" value="RIBOSOMAL_S5"/>
    <property type="match status" value="1"/>
</dbReference>
<dbReference type="PROSITE" id="PS50881">
    <property type="entry name" value="S5_DSRBD"/>
    <property type="match status" value="1"/>
</dbReference>
<sequence>MAFKDNAVELEERVVAINRVTKVVKGGRRLRFAALVVVGDGNGRVGFGTGKAQEVPEAIRKAVEAAKKNMIEVPMVGTTIPHEVYTNFGGAKVLLKPAVEGSGVAAGGAVRAVIELAGVADITSKSLGSNTPINIVRATVEGLKQLKRAEEVAALRGISVSDLA</sequence>
<evidence type="ECO:0000255" key="1">
    <source>
        <dbReference type="HAMAP-Rule" id="MF_01307"/>
    </source>
</evidence>
<evidence type="ECO:0000305" key="2"/>
<name>RS5_STRPC</name>
<reference key="1">
    <citation type="journal article" date="2006" name="Proc. Natl. Acad. Sci. U.S.A.">
        <title>Molecular genetic anatomy of inter- and intraserotype variation in the human bacterial pathogen group A Streptococcus.</title>
        <authorList>
            <person name="Beres S.B."/>
            <person name="Richter E.W."/>
            <person name="Nagiec M.J."/>
            <person name="Sumby P."/>
            <person name="Porcella S.F."/>
            <person name="DeLeo F.R."/>
            <person name="Musser J.M."/>
        </authorList>
    </citation>
    <scope>NUCLEOTIDE SEQUENCE [LARGE SCALE GENOMIC DNA]</scope>
    <source>
        <strain>MGAS9429</strain>
    </source>
</reference>
<accession>Q1JP00</accession>
<protein>
    <recommendedName>
        <fullName evidence="1">Small ribosomal subunit protein uS5</fullName>
    </recommendedName>
    <alternativeName>
        <fullName evidence="2">30S ribosomal protein S5</fullName>
    </alternativeName>
</protein>
<proteinExistence type="inferred from homology"/>
<comment type="function">
    <text evidence="1">With S4 and S12 plays an important role in translational accuracy.</text>
</comment>
<comment type="function">
    <text evidence="1">Located at the back of the 30S subunit body where it stabilizes the conformation of the head with respect to the body.</text>
</comment>
<comment type="subunit">
    <text evidence="1">Part of the 30S ribosomal subunit. Contacts proteins S4 and S8.</text>
</comment>
<comment type="domain">
    <text>The N-terminal domain interacts with the head of the 30S subunit; the C-terminal domain interacts with the body and contacts protein S4. The interaction surface between S4 and S5 is involved in control of translational fidelity.</text>
</comment>
<comment type="similarity">
    <text evidence="1">Belongs to the universal ribosomal protein uS5 family.</text>
</comment>